<evidence type="ECO:0000255" key="1">
    <source>
        <dbReference type="HAMAP-Rule" id="MF_01326"/>
    </source>
</evidence>
<evidence type="ECO:0000305" key="2"/>
<accession>A8F2D6</accession>
<dbReference type="EMBL" id="CP000683">
    <property type="protein sequence ID" value="ABV85072.1"/>
    <property type="molecule type" value="Genomic_DNA"/>
</dbReference>
<dbReference type="RefSeq" id="WP_012153038.1">
    <property type="nucleotide sequence ID" value="NC_009900.1"/>
</dbReference>
<dbReference type="SMR" id="A8F2D6"/>
<dbReference type="KEGG" id="rms:RMA_1029"/>
<dbReference type="HOGENOM" id="CLU_093315_2_0_5"/>
<dbReference type="Proteomes" id="UP000001311">
    <property type="component" value="Chromosome"/>
</dbReference>
<dbReference type="GO" id="GO:1990904">
    <property type="term" value="C:ribonucleoprotein complex"/>
    <property type="evidence" value="ECO:0007669"/>
    <property type="project" value="UniProtKB-KW"/>
</dbReference>
<dbReference type="GO" id="GO:0005840">
    <property type="term" value="C:ribosome"/>
    <property type="evidence" value="ECO:0007669"/>
    <property type="project" value="UniProtKB-KW"/>
</dbReference>
<dbReference type="GO" id="GO:0019843">
    <property type="term" value="F:rRNA binding"/>
    <property type="evidence" value="ECO:0007669"/>
    <property type="project" value="UniProtKB-UniRule"/>
</dbReference>
<dbReference type="GO" id="GO:0003735">
    <property type="term" value="F:structural constituent of ribosome"/>
    <property type="evidence" value="ECO:0007669"/>
    <property type="project" value="InterPro"/>
</dbReference>
<dbReference type="GO" id="GO:0006412">
    <property type="term" value="P:translation"/>
    <property type="evidence" value="ECO:0007669"/>
    <property type="project" value="UniProtKB-UniRule"/>
</dbReference>
<dbReference type="CDD" id="cd06089">
    <property type="entry name" value="KOW_RPL26"/>
    <property type="match status" value="1"/>
</dbReference>
<dbReference type="FunFam" id="2.30.30.30:FF:000004">
    <property type="entry name" value="50S ribosomal protein L24"/>
    <property type="match status" value="1"/>
</dbReference>
<dbReference type="Gene3D" id="2.30.30.30">
    <property type="match status" value="1"/>
</dbReference>
<dbReference type="HAMAP" id="MF_01326_B">
    <property type="entry name" value="Ribosomal_uL24_B"/>
    <property type="match status" value="1"/>
</dbReference>
<dbReference type="InterPro" id="IPR005824">
    <property type="entry name" value="KOW"/>
</dbReference>
<dbReference type="InterPro" id="IPR014722">
    <property type="entry name" value="Rib_uL2_dom2"/>
</dbReference>
<dbReference type="InterPro" id="IPR003256">
    <property type="entry name" value="Ribosomal_uL24"/>
</dbReference>
<dbReference type="InterPro" id="IPR005825">
    <property type="entry name" value="Ribosomal_uL24_CS"/>
</dbReference>
<dbReference type="InterPro" id="IPR041988">
    <property type="entry name" value="Ribosomal_uL24_KOW"/>
</dbReference>
<dbReference type="InterPro" id="IPR008991">
    <property type="entry name" value="Translation_prot_SH3-like_sf"/>
</dbReference>
<dbReference type="NCBIfam" id="TIGR01079">
    <property type="entry name" value="rplX_bact"/>
    <property type="match status" value="1"/>
</dbReference>
<dbReference type="PANTHER" id="PTHR12903">
    <property type="entry name" value="MITOCHONDRIAL RIBOSOMAL PROTEIN L24"/>
    <property type="match status" value="1"/>
</dbReference>
<dbReference type="Pfam" id="PF00467">
    <property type="entry name" value="KOW"/>
    <property type="match status" value="1"/>
</dbReference>
<dbReference type="Pfam" id="PF17136">
    <property type="entry name" value="ribosomal_L24"/>
    <property type="match status" value="1"/>
</dbReference>
<dbReference type="SMART" id="SM00739">
    <property type="entry name" value="KOW"/>
    <property type="match status" value="1"/>
</dbReference>
<dbReference type="SUPFAM" id="SSF50104">
    <property type="entry name" value="Translation proteins SH3-like domain"/>
    <property type="match status" value="1"/>
</dbReference>
<dbReference type="PROSITE" id="PS01108">
    <property type="entry name" value="RIBOSOMAL_L24"/>
    <property type="match status" value="1"/>
</dbReference>
<reference key="1">
    <citation type="journal article" date="2007" name="Genome Res.">
        <title>Lateral gene transfer between obligate intracellular bacteria: evidence from the Rickettsia massiliae genome.</title>
        <authorList>
            <person name="Blanc G."/>
            <person name="Ogata H."/>
            <person name="Robert C."/>
            <person name="Audic S."/>
            <person name="Claverie J.-M."/>
            <person name="Raoult D."/>
        </authorList>
    </citation>
    <scope>NUCLEOTIDE SEQUENCE [LARGE SCALE GENOMIC DNA]</scope>
    <source>
        <strain>Mtu5</strain>
    </source>
</reference>
<keyword id="KW-0687">Ribonucleoprotein</keyword>
<keyword id="KW-0689">Ribosomal protein</keyword>
<keyword id="KW-0694">RNA-binding</keyword>
<keyword id="KW-0699">rRNA-binding</keyword>
<protein>
    <recommendedName>
        <fullName evidence="1">Large ribosomal subunit protein uL24</fullName>
    </recommendedName>
    <alternativeName>
        <fullName evidence="2">50S ribosomal protein L24</fullName>
    </alternativeName>
</protein>
<sequence>MIKLKVKKGDEVVVITGKHKGKKGKILKVFPEDSKVIVFGVNLVKKHTKSNQMSEGGIITKELPIHISNIAHIDPKTGNPTKVAFKFLEDGSKVRVAKKSGEIIGKEGK</sequence>
<comment type="function">
    <text evidence="1">One of two assembly initiator proteins, it binds directly to the 5'-end of the 23S rRNA, where it nucleates assembly of the 50S subunit.</text>
</comment>
<comment type="function">
    <text evidence="1">One of the proteins that surrounds the polypeptide exit tunnel on the outside of the subunit.</text>
</comment>
<comment type="subunit">
    <text evidence="1">Part of the 50S ribosomal subunit.</text>
</comment>
<comment type="similarity">
    <text evidence="1">Belongs to the universal ribosomal protein uL24 family.</text>
</comment>
<organism>
    <name type="scientific">Rickettsia massiliae (strain Mtu5)</name>
    <dbReference type="NCBI Taxonomy" id="416276"/>
    <lineage>
        <taxon>Bacteria</taxon>
        <taxon>Pseudomonadati</taxon>
        <taxon>Pseudomonadota</taxon>
        <taxon>Alphaproteobacteria</taxon>
        <taxon>Rickettsiales</taxon>
        <taxon>Rickettsiaceae</taxon>
        <taxon>Rickettsieae</taxon>
        <taxon>Rickettsia</taxon>
        <taxon>spotted fever group</taxon>
    </lineage>
</organism>
<proteinExistence type="inferred from homology"/>
<name>RL24_RICM5</name>
<feature type="chain" id="PRO_1000067585" description="Large ribosomal subunit protein uL24">
    <location>
        <begin position="1"/>
        <end position="109"/>
    </location>
</feature>
<gene>
    <name evidence="1" type="primary">rplX</name>
    <name type="ordered locus">RMA_1029</name>
</gene>